<comment type="function">
    <text evidence="3">Functions as an E3 ubiquitin ligase and plays a role in the inhibition of innate immunity by preventing IFN-mediated signaling. Induces the ubiquitination and degradation of host STAT1, STAT2 and IRF9, resulting in the blockade of ISGF3 nuclear translocation.</text>
</comment>
<comment type="pathway">
    <text>Protein modification; protein ubiquitination.</text>
</comment>
<comment type="subcellular location">
    <subcellularLocation>
        <location evidence="1">Host nucleus</location>
    </subcellularLocation>
    <text>Localizes in small nuclear bodies early in infection then moves to a more diffuse distribution in viral compartments as infection progresses.</text>
</comment>
<comment type="PTM">
    <text evidence="1">Tyrosine phosphorylated.</text>
</comment>
<comment type="miscellaneous">
    <text>ICP22 and protein US1.5 mRNAs are transcribed from two different promoters on the US1 gene.</text>
</comment>
<comment type="similarity">
    <text evidence="4">Belongs to the herpesviridae ICP22 family.</text>
</comment>
<reference key="1">
    <citation type="journal article" date="1998" name="J. Virol.">
        <title>The genome sequence of herpes simplex virus type 2.</title>
        <authorList>
            <person name="Dolan A."/>
            <person name="Jamieson F.E."/>
            <person name="Cunningham C."/>
            <person name="Barnett B.C."/>
            <person name="McGeoch D.J."/>
        </authorList>
    </citation>
    <scope>NUCLEOTIDE SEQUENCE [LARGE SCALE GENOMIC DNA]</scope>
</reference>
<reference key="2">
    <citation type="journal article" date="2020" name="J. Immunol.">
        <title>Herpes Simplex Virus Type 2 Inhibits Type I IFN Signaling Mediated by the Novel E3 Ubiquitin Protein Ligase Activity of Viral Protein ICP22.</title>
        <authorList>
            <person name="Zhang M."/>
            <person name="Fu M."/>
            <person name="Li M."/>
            <person name="Hu H."/>
            <person name="Gong S."/>
            <person name="Hu Q."/>
        </authorList>
    </citation>
    <scope>FUNCTION</scope>
</reference>
<name>ICP22_HHV2H</name>
<dbReference type="EMBL" id="Z86099">
    <property type="protein sequence ID" value="CAB06708.1"/>
    <property type="molecule type" value="Genomic_DNA"/>
</dbReference>
<dbReference type="UniPathway" id="UPA00143"/>
<dbReference type="Proteomes" id="UP000001874">
    <property type="component" value="Segment"/>
</dbReference>
<dbReference type="GO" id="GO:0042025">
    <property type="term" value="C:host cell nucleus"/>
    <property type="evidence" value="ECO:0007669"/>
    <property type="project" value="UniProtKB-SubCell"/>
</dbReference>
<dbReference type="GO" id="GO:0016567">
    <property type="term" value="P:protein ubiquitination"/>
    <property type="evidence" value="ECO:0007669"/>
    <property type="project" value="UniProtKB-UniPathway"/>
</dbReference>
<dbReference type="GO" id="GO:0010468">
    <property type="term" value="P:regulation of gene expression"/>
    <property type="evidence" value="ECO:0007669"/>
    <property type="project" value="InterPro"/>
</dbReference>
<dbReference type="GO" id="GO:0052170">
    <property type="term" value="P:symbiont-mediated suppression of host innate immune response"/>
    <property type="evidence" value="ECO:0007669"/>
    <property type="project" value="UniProtKB-KW"/>
</dbReference>
<dbReference type="GO" id="GO:0039563">
    <property type="term" value="P:symbiont-mediated suppression of host JAK-STAT cascade via inhibition of STAT1 activity"/>
    <property type="evidence" value="ECO:0000314"/>
    <property type="project" value="UniProtKB"/>
</dbReference>
<dbReference type="GO" id="GO:0039564">
    <property type="term" value="P:symbiont-mediated suppression of host JAK-STAT cascade via inhibition of STAT2 activity"/>
    <property type="evidence" value="ECO:0000314"/>
    <property type="project" value="UniProtKB"/>
</dbReference>
<dbReference type="GO" id="GO:0039502">
    <property type="term" value="P:symbiont-mediated suppression of host type I interferon-mediated signaling pathway"/>
    <property type="evidence" value="ECO:0007669"/>
    <property type="project" value="UniProtKB-KW"/>
</dbReference>
<dbReference type="InterPro" id="IPR003403">
    <property type="entry name" value="IE68"/>
</dbReference>
<dbReference type="Pfam" id="PF02479">
    <property type="entry name" value="Herpes_IE68"/>
    <property type="match status" value="1"/>
</dbReference>
<gene>
    <name type="ORF">US1</name>
</gene>
<organism>
    <name type="scientific">Human herpesvirus 2 (strain HG52)</name>
    <name type="common">HHV-2</name>
    <name type="synonym">Human herpes simplex virus 2</name>
    <dbReference type="NCBI Taxonomy" id="10315"/>
    <lineage>
        <taxon>Viruses</taxon>
        <taxon>Duplodnaviria</taxon>
        <taxon>Heunggongvirae</taxon>
        <taxon>Peploviricota</taxon>
        <taxon>Herviviricetes</taxon>
        <taxon>Herpesvirales</taxon>
        <taxon>Orthoherpesviridae</taxon>
        <taxon>Alphaherpesvirinae</taxon>
        <taxon>Simplexvirus</taxon>
        <taxon>Simplexvirus humanalpha2</taxon>
        <taxon>Human herpesvirus 2</taxon>
    </lineage>
</organism>
<accession>P89474</accession>
<keyword id="KW-0244">Early protein</keyword>
<keyword id="KW-1048">Host nucleus</keyword>
<keyword id="KW-0945">Host-virus interaction</keyword>
<keyword id="KW-1090">Inhibition of host innate immune response by virus</keyword>
<keyword id="KW-1114">Inhibition of host interferon signaling pathway by virus</keyword>
<keyword id="KW-1105">Inhibition of host STAT1 by virus</keyword>
<keyword id="KW-1106">Inhibition of host STAT2 by virus</keyword>
<keyword id="KW-0922">Interferon antiviral system evasion</keyword>
<keyword id="KW-0597">Phosphoprotein</keyword>
<keyword id="KW-1185">Reference proteome</keyword>
<keyword id="KW-0804">Transcription</keyword>
<keyword id="KW-0805">Transcription regulation</keyword>
<keyword id="KW-0833">Ubl conjugation pathway</keyword>
<keyword id="KW-0899">Viral immunoevasion</keyword>
<feature type="chain" id="PRO_0000385458" description="E3 ubiquitin ligase ICP22">
    <location>
        <begin position="1"/>
        <end position="413"/>
    </location>
</feature>
<feature type="region of interest" description="Disordered" evidence="2">
    <location>
        <begin position="1"/>
        <end position="124"/>
    </location>
</feature>
<feature type="region of interest" description="Disordered" evidence="2">
    <location>
        <begin position="289"/>
        <end position="334"/>
    </location>
</feature>
<feature type="region of interest" description="Disordered" evidence="2">
    <location>
        <begin position="370"/>
        <end position="390"/>
    </location>
</feature>
<feature type="compositionally biased region" description="Basic and acidic residues" evidence="2">
    <location>
        <begin position="62"/>
        <end position="76"/>
    </location>
</feature>
<feature type="compositionally biased region" description="Low complexity" evidence="2">
    <location>
        <begin position="84"/>
        <end position="97"/>
    </location>
</feature>
<feature type="compositionally biased region" description="Acidic residues" evidence="2">
    <location>
        <begin position="297"/>
        <end position="309"/>
    </location>
</feature>
<feature type="modified residue" description="Phosphotyrosine; by host" evidence="1">
    <location>
        <position position="189"/>
    </location>
</feature>
<sequence>MADIPPDPPALNTTPANHAPPSPPPGSRKRRRPVLPSSSESEGKPDTESESSSTESSEDEAGDLRGGRRRSPRELGGRYFLDLSAESTTGTESEGTGPSDDDDDDASDGWLVDTPPRKSKRPRINLRLTSSPDRRAGVVFPEVWRSDRPIRAAQPQAPASLPGIAHAHRRSARQAQMRSGAAWTLDLHYIRQCVNQLFRILRAAPNPPGSANRLRHLVRDCYLMGYCRTRLGPRTWGRLLQISGGTWDVRLRNAIREVEAHFEPAAEPVCELPCLNARRYGPECDVGNLETNGGSTSDDEISDATDSDDTLASHSDTEGGPSPAGRENPESASGGAIAARLECEFGTFDWTSEEGSQPWLSAVVADTSSAERSGLPAPGACRATEAPEREDGCRKMRFPAACPYPCGHTFLRP</sequence>
<protein>
    <recommendedName>
        <fullName>E3 ubiquitin ligase ICP22</fullName>
    </recommendedName>
    <alternativeName>
        <fullName>Immediate-early protein IE68</fullName>
    </alternativeName>
    <alternativeName>
        <fullName>Infected cell protein 22</fullName>
        <shortName>ICP22</shortName>
    </alternativeName>
</protein>
<organismHost>
    <name type="scientific">Homo sapiens</name>
    <name type="common">Human</name>
    <dbReference type="NCBI Taxonomy" id="9606"/>
</organismHost>
<proteinExistence type="inferred from homology"/>
<evidence type="ECO:0000250" key="1">
    <source>
        <dbReference type="UniProtKB" id="P04485"/>
    </source>
</evidence>
<evidence type="ECO:0000256" key="2">
    <source>
        <dbReference type="SAM" id="MobiDB-lite"/>
    </source>
</evidence>
<evidence type="ECO:0000269" key="3">
    <source>
    </source>
</evidence>
<evidence type="ECO:0000305" key="4"/>